<sequence length="178" mass="20541">MDKKTVKVIEKYSMPFVQLVLEKGEEDRIFSDLTQIKQVVEKTGLPSFLKQVAVDESDKEKTIAFFQDSVSPLLQNFIQVLAYNHRANLFYDVLVDCLNRLEKETNRFEVTITSAHPLTDEQKTRLLPLIEKKMSLKVRSVKEQIDESLIGGFVIFANHKTIDVSIKQQLKVVKENLK</sequence>
<reference key="1">
    <citation type="journal article" date="2010" name="Genome Biol.">
        <title>Structure and dynamics of the pan-genome of Streptococcus pneumoniae and closely related species.</title>
        <authorList>
            <person name="Donati C."/>
            <person name="Hiller N.L."/>
            <person name="Tettelin H."/>
            <person name="Muzzi A."/>
            <person name="Croucher N.J."/>
            <person name="Angiuoli S.V."/>
            <person name="Oggioni M."/>
            <person name="Dunning Hotopp J.C."/>
            <person name="Hu F.Z."/>
            <person name="Riley D.R."/>
            <person name="Covacci A."/>
            <person name="Mitchell T.J."/>
            <person name="Bentley S.D."/>
            <person name="Kilian M."/>
            <person name="Ehrlich G.D."/>
            <person name="Rappuoli R."/>
            <person name="Moxon E.R."/>
            <person name="Masignani V."/>
        </authorList>
    </citation>
    <scope>NUCLEOTIDE SEQUENCE [LARGE SCALE GENOMIC DNA]</scope>
    <source>
        <strain>Hungary19A-6</strain>
    </source>
</reference>
<comment type="function">
    <text evidence="1">F(1)F(0) ATP synthase produces ATP from ADP in the presence of a proton or sodium gradient. F-type ATPases consist of two structural domains, F(1) containing the extramembraneous catalytic core and F(0) containing the membrane proton channel, linked together by a central stalk and a peripheral stalk. During catalysis, ATP synthesis in the catalytic domain of F(1) is coupled via a rotary mechanism of the central stalk subunits to proton translocation.</text>
</comment>
<comment type="function">
    <text evidence="1">This protein is part of the stalk that links CF(0) to CF(1). It either transmits conformational changes from CF(0) to CF(1) or is implicated in proton conduction.</text>
</comment>
<comment type="subunit">
    <text evidence="1">F-type ATPases have 2 components, F(1) - the catalytic core - and F(0) - the membrane proton channel. F(1) has five subunits: alpha(3), beta(3), gamma(1), delta(1), epsilon(1). F(0) has three main subunits: a(1), b(2) and c(10-14). The alpha and beta chains form an alternating ring which encloses part of the gamma chain. F(1) is attached to F(0) by a central stalk formed by the gamma and epsilon chains, while a peripheral stalk is formed by the delta and b chains.</text>
</comment>
<comment type="subcellular location">
    <subcellularLocation>
        <location evidence="1">Cell membrane</location>
        <topology evidence="1">Peripheral membrane protein</topology>
    </subcellularLocation>
</comment>
<comment type="similarity">
    <text evidence="1">Belongs to the ATPase delta chain family.</text>
</comment>
<proteinExistence type="inferred from homology"/>
<dbReference type="EMBL" id="CP000936">
    <property type="protein sequence ID" value="ACA35952.1"/>
    <property type="molecule type" value="Genomic_DNA"/>
</dbReference>
<dbReference type="RefSeq" id="WP_000359036.1">
    <property type="nucleotide sequence ID" value="NC_010380.1"/>
</dbReference>
<dbReference type="SMR" id="B1ICT2"/>
<dbReference type="KEGG" id="spv:SPH_1622"/>
<dbReference type="HOGENOM" id="CLU_085114_1_2_9"/>
<dbReference type="Proteomes" id="UP000002163">
    <property type="component" value="Chromosome"/>
</dbReference>
<dbReference type="GO" id="GO:0005886">
    <property type="term" value="C:plasma membrane"/>
    <property type="evidence" value="ECO:0007669"/>
    <property type="project" value="UniProtKB-SubCell"/>
</dbReference>
<dbReference type="GO" id="GO:0045259">
    <property type="term" value="C:proton-transporting ATP synthase complex"/>
    <property type="evidence" value="ECO:0007669"/>
    <property type="project" value="UniProtKB-KW"/>
</dbReference>
<dbReference type="GO" id="GO:0046933">
    <property type="term" value="F:proton-transporting ATP synthase activity, rotational mechanism"/>
    <property type="evidence" value="ECO:0007669"/>
    <property type="project" value="UniProtKB-UniRule"/>
</dbReference>
<dbReference type="Gene3D" id="1.10.520.20">
    <property type="entry name" value="N-terminal domain of the delta subunit of the F1F0-ATP synthase"/>
    <property type="match status" value="1"/>
</dbReference>
<dbReference type="HAMAP" id="MF_01416">
    <property type="entry name" value="ATP_synth_delta_bact"/>
    <property type="match status" value="1"/>
</dbReference>
<dbReference type="InterPro" id="IPR026015">
    <property type="entry name" value="ATP_synth_OSCP/delta_N_sf"/>
</dbReference>
<dbReference type="InterPro" id="IPR000711">
    <property type="entry name" value="ATPase_OSCP/dsu"/>
</dbReference>
<dbReference type="NCBIfam" id="TIGR01145">
    <property type="entry name" value="ATP_synt_delta"/>
    <property type="match status" value="1"/>
</dbReference>
<dbReference type="NCBIfam" id="NF004401">
    <property type="entry name" value="PRK05758.2-1"/>
    <property type="match status" value="1"/>
</dbReference>
<dbReference type="PANTHER" id="PTHR11910">
    <property type="entry name" value="ATP SYNTHASE DELTA CHAIN"/>
    <property type="match status" value="1"/>
</dbReference>
<dbReference type="Pfam" id="PF00213">
    <property type="entry name" value="OSCP"/>
    <property type="match status" value="1"/>
</dbReference>
<dbReference type="PRINTS" id="PR00125">
    <property type="entry name" value="ATPASEDELTA"/>
</dbReference>
<dbReference type="SUPFAM" id="SSF47928">
    <property type="entry name" value="N-terminal domain of the delta subunit of the F1F0-ATP synthase"/>
    <property type="match status" value="1"/>
</dbReference>
<evidence type="ECO:0000255" key="1">
    <source>
        <dbReference type="HAMAP-Rule" id="MF_01416"/>
    </source>
</evidence>
<name>ATPD_STRPI</name>
<keyword id="KW-0066">ATP synthesis</keyword>
<keyword id="KW-1003">Cell membrane</keyword>
<keyword id="KW-0139">CF(1)</keyword>
<keyword id="KW-0375">Hydrogen ion transport</keyword>
<keyword id="KW-0406">Ion transport</keyword>
<keyword id="KW-0472">Membrane</keyword>
<keyword id="KW-0813">Transport</keyword>
<protein>
    <recommendedName>
        <fullName evidence="1">ATP synthase subunit delta</fullName>
    </recommendedName>
    <alternativeName>
        <fullName evidence="1">ATP synthase F(1) sector subunit delta</fullName>
    </alternativeName>
    <alternativeName>
        <fullName evidence="1">F-type ATPase subunit delta</fullName>
        <shortName evidence="1">F-ATPase subunit delta</shortName>
    </alternativeName>
</protein>
<gene>
    <name evidence="1" type="primary">atpH</name>
    <name type="ordered locus">SPH_1622</name>
</gene>
<organism>
    <name type="scientific">Streptococcus pneumoniae (strain Hungary19A-6)</name>
    <dbReference type="NCBI Taxonomy" id="487214"/>
    <lineage>
        <taxon>Bacteria</taxon>
        <taxon>Bacillati</taxon>
        <taxon>Bacillota</taxon>
        <taxon>Bacilli</taxon>
        <taxon>Lactobacillales</taxon>
        <taxon>Streptococcaceae</taxon>
        <taxon>Streptococcus</taxon>
    </lineage>
</organism>
<feature type="chain" id="PRO_0000371154" description="ATP synthase subunit delta">
    <location>
        <begin position="1"/>
        <end position="178"/>
    </location>
</feature>
<accession>B1ICT2</accession>